<name>SELU_SHELP</name>
<organism>
    <name type="scientific">Shewanella loihica (strain ATCC BAA-1088 / PV-4)</name>
    <dbReference type="NCBI Taxonomy" id="323850"/>
    <lineage>
        <taxon>Bacteria</taxon>
        <taxon>Pseudomonadati</taxon>
        <taxon>Pseudomonadota</taxon>
        <taxon>Gammaproteobacteria</taxon>
        <taxon>Alteromonadales</taxon>
        <taxon>Shewanellaceae</taxon>
        <taxon>Shewanella</taxon>
    </lineage>
</organism>
<sequence length="372" mass="41927">MDNHQLANVIPASEYGRILASGHPIMDVRAPIEFTKGAFPASSNHPLMRDDERQQVGTCYKEHGQDAAIALGHSLVCGAVKQQRVDAWLAYLDAHPDAYLYCFRGGLRSQLTQQWLAEAGRDVPYIQGGYKAMRQYLIDTIDRAPEARPMLILSGITGSGKTDFLLQRQEAVDLEGLAHHRGSSFGRYHEGQPTQINFENSLGVALLKHQQSPARILLLEDESYLIGRSALPKAFYMGMQAASVVILEEPLEARLTRLLDEYVHKMHRGYVERLGEEAGFEAFAEYLANSISGIKKRLGGKQHDELQQMITDALAVQTQRGDTQAHLEWIALLLSKYYDPMYQYQIGKKADRVIFQGDHQAMHQWLDEYATR</sequence>
<reference key="1">
    <citation type="submission" date="2007-03" db="EMBL/GenBank/DDBJ databases">
        <title>Complete sequence of Shewanella loihica PV-4.</title>
        <authorList>
            <consortium name="US DOE Joint Genome Institute"/>
            <person name="Copeland A."/>
            <person name="Lucas S."/>
            <person name="Lapidus A."/>
            <person name="Barry K."/>
            <person name="Detter J.C."/>
            <person name="Glavina del Rio T."/>
            <person name="Hammon N."/>
            <person name="Israni S."/>
            <person name="Dalin E."/>
            <person name="Tice H."/>
            <person name="Pitluck S."/>
            <person name="Chain P."/>
            <person name="Malfatti S."/>
            <person name="Shin M."/>
            <person name="Vergez L."/>
            <person name="Schmutz J."/>
            <person name="Larimer F."/>
            <person name="Land M."/>
            <person name="Hauser L."/>
            <person name="Kyrpides N."/>
            <person name="Mikhailova N."/>
            <person name="Romine M.F."/>
            <person name="Serres G."/>
            <person name="Fredrickson J."/>
            <person name="Tiedje J."/>
            <person name="Richardson P."/>
        </authorList>
    </citation>
    <scope>NUCLEOTIDE SEQUENCE [LARGE SCALE GENOMIC DNA]</scope>
    <source>
        <strain>ATCC BAA-1088 / PV-4</strain>
    </source>
</reference>
<feature type="chain" id="PRO_0000292711" description="tRNA 2-selenouridine synthase">
    <location>
        <begin position="1"/>
        <end position="372"/>
    </location>
</feature>
<feature type="domain" description="Rhodanese" evidence="1">
    <location>
        <begin position="19"/>
        <end position="142"/>
    </location>
</feature>
<feature type="active site" description="S-selanylcysteine intermediate" evidence="1">
    <location>
        <position position="102"/>
    </location>
</feature>
<accession>A3Q958</accession>
<gene>
    <name evidence="1" type="primary">selU</name>
    <name type="ordered locus">Shew_0134</name>
</gene>
<protein>
    <recommendedName>
        <fullName evidence="1">tRNA 2-selenouridine synthase</fullName>
        <ecNumber evidence="1">2.9.1.3</ecNumber>
    </recommendedName>
</protein>
<keyword id="KW-1185">Reference proteome</keyword>
<keyword id="KW-0711">Selenium</keyword>
<keyword id="KW-0808">Transferase</keyword>
<proteinExistence type="inferred from homology"/>
<dbReference type="EC" id="2.9.1.3" evidence="1"/>
<dbReference type="EMBL" id="CP000606">
    <property type="protein sequence ID" value="ABO22006.1"/>
    <property type="molecule type" value="Genomic_DNA"/>
</dbReference>
<dbReference type="RefSeq" id="WP_011863943.1">
    <property type="nucleotide sequence ID" value="NC_009092.1"/>
</dbReference>
<dbReference type="SMR" id="A3Q958"/>
<dbReference type="STRING" id="323850.Shew_0134"/>
<dbReference type="KEGG" id="slo:Shew_0134"/>
<dbReference type="eggNOG" id="COG2603">
    <property type="taxonomic scope" value="Bacteria"/>
</dbReference>
<dbReference type="HOGENOM" id="CLU_043456_1_0_6"/>
<dbReference type="OrthoDB" id="9808735at2"/>
<dbReference type="Proteomes" id="UP000001558">
    <property type="component" value="Chromosome"/>
</dbReference>
<dbReference type="GO" id="GO:0016765">
    <property type="term" value="F:transferase activity, transferring alkyl or aryl (other than methyl) groups"/>
    <property type="evidence" value="ECO:0007669"/>
    <property type="project" value="UniProtKB-UniRule"/>
</dbReference>
<dbReference type="GO" id="GO:0043828">
    <property type="term" value="F:tRNA 2-selenouridine synthase activity"/>
    <property type="evidence" value="ECO:0007669"/>
    <property type="project" value="UniProtKB-EC"/>
</dbReference>
<dbReference type="GO" id="GO:0002098">
    <property type="term" value="P:tRNA wobble uridine modification"/>
    <property type="evidence" value="ECO:0007669"/>
    <property type="project" value="UniProtKB-UniRule"/>
</dbReference>
<dbReference type="Gene3D" id="3.40.250.10">
    <property type="entry name" value="Rhodanese-like domain"/>
    <property type="match status" value="1"/>
</dbReference>
<dbReference type="HAMAP" id="MF_01622">
    <property type="entry name" value="tRNA_sel_U_synth"/>
    <property type="match status" value="1"/>
</dbReference>
<dbReference type="InterPro" id="IPR001763">
    <property type="entry name" value="Rhodanese-like_dom"/>
</dbReference>
<dbReference type="InterPro" id="IPR036873">
    <property type="entry name" value="Rhodanese-like_dom_sf"/>
</dbReference>
<dbReference type="InterPro" id="IPR017582">
    <property type="entry name" value="SelU"/>
</dbReference>
<dbReference type="NCBIfam" id="NF008750">
    <property type="entry name" value="PRK11784.1-2"/>
    <property type="match status" value="1"/>
</dbReference>
<dbReference type="NCBIfam" id="NF008751">
    <property type="entry name" value="PRK11784.1-3"/>
    <property type="match status" value="1"/>
</dbReference>
<dbReference type="NCBIfam" id="TIGR03167">
    <property type="entry name" value="tRNA_sel_U_synt"/>
    <property type="match status" value="1"/>
</dbReference>
<dbReference type="PANTHER" id="PTHR30401">
    <property type="entry name" value="TRNA 2-SELENOURIDINE SYNTHASE"/>
    <property type="match status" value="1"/>
</dbReference>
<dbReference type="PANTHER" id="PTHR30401:SF0">
    <property type="entry name" value="TRNA 2-SELENOURIDINE SYNTHASE"/>
    <property type="match status" value="1"/>
</dbReference>
<dbReference type="SMART" id="SM00450">
    <property type="entry name" value="RHOD"/>
    <property type="match status" value="1"/>
</dbReference>
<dbReference type="SUPFAM" id="SSF52821">
    <property type="entry name" value="Rhodanese/Cell cycle control phosphatase"/>
    <property type="match status" value="1"/>
</dbReference>
<dbReference type="PROSITE" id="PS50206">
    <property type="entry name" value="RHODANESE_3"/>
    <property type="match status" value="1"/>
</dbReference>
<comment type="function">
    <text evidence="1">Involved in the post-transcriptional modification of the uridine at the wobble position (U34) of tRNA(Lys), tRNA(Glu) and tRNA(Gln). Catalyzes the conversion of 2-thiouridine (S2U-RNA) to 2-selenouridine (Se2U-RNA). Acts in a two-step process involving geranylation of 2-thiouridine (S2U) to S-geranyl-2-thiouridine (geS2U) and subsequent selenation of the latter derivative to 2-selenouridine (Se2U) in the tRNA chain.</text>
</comment>
<comment type="catalytic activity">
    <reaction evidence="1">
        <text>5-methylaminomethyl-2-thiouridine(34) in tRNA + selenophosphate + (2E)-geranyl diphosphate + H2O + H(+) = 5-methylaminomethyl-2-selenouridine(34) in tRNA + (2E)-thiogeraniol + phosphate + diphosphate</text>
        <dbReference type="Rhea" id="RHEA:42716"/>
        <dbReference type="Rhea" id="RHEA-COMP:10195"/>
        <dbReference type="Rhea" id="RHEA-COMP:10196"/>
        <dbReference type="ChEBI" id="CHEBI:15377"/>
        <dbReference type="ChEBI" id="CHEBI:15378"/>
        <dbReference type="ChEBI" id="CHEBI:16144"/>
        <dbReference type="ChEBI" id="CHEBI:33019"/>
        <dbReference type="ChEBI" id="CHEBI:43474"/>
        <dbReference type="ChEBI" id="CHEBI:58057"/>
        <dbReference type="ChEBI" id="CHEBI:74455"/>
        <dbReference type="ChEBI" id="CHEBI:82743"/>
        <dbReference type="ChEBI" id="CHEBI:143703"/>
        <dbReference type="EC" id="2.9.1.3"/>
    </reaction>
    <physiologicalReaction direction="left-to-right" evidence="1">
        <dbReference type="Rhea" id="RHEA:42717"/>
    </physiologicalReaction>
</comment>
<comment type="catalytic activity">
    <reaction evidence="1">
        <text>5-methylaminomethyl-2-thiouridine(34) in tRNA + (2E)-geranyl diphosphate = 5-methylaminomethyl-S-(2E)-geranyl-thiouridine(34) in tRNA + diphosphate</text>
        <dbReference type="Rhea" id="RHEA:14085"/>
        <dbReference type="Rhea" id="RHEA-COMP:10195"/>
        <dbReference type="Rhea" id="RHEA-COMP:14654"/>
        <dbReference type="ChEBI" id="CHEBI:33019"/>
        <dbReference type="ChEBI" id="CHEBI:58057"/>
        <dbReference type="ChEBI" id="CHEBI:74455"/>
        <dbReference type="ChEBI" id="CHEBI:140632"/>
    </reaction>
    <physiologicalReaction direction="left-to-right" evidence="1">
        <dbReference type="Rhea" id="RHEA:14086"/>
    </physiologicalReaction>
</comment>
<comment type="catalytic activity">
    <reaction evidence="1">
        <text>5-methylaminomethyl-S-(2E)-geranyl-thiouridine(34) in tRNA + selenophosphate + H(+) = 5-methylaminomethyl-2-(Se-phospho)selenouridine(34) in tRNA + (2E)-thiogeraniol</text>
        <dbReference type="Rhea" id="RHEA:60172"/>
        <dbReference type="Rhea" id="RHEA-COMP:14654"/>
        <dbReference type="Rhea" id="RHEA-COMP:15523"/>
        <dbReference type="ChEBI" id="CHEBI:15378"/>
        <dbReference type="ChEBI" id="CHEBI:16144"/>
        <dbReference type="ChEBI" id="CHEBI:140632"/>
        <dbReference type="ChEBI" id="CHEBI:143702"/>
        <dbReference type="ChEBI" id="CHEBI:143703"/>
    </reaction>
    <physiologicalReaction direction="left-to-right" evidence="1">
        <dbReference type="Rhea" id="RHEA:60173"/>
    </physiologicalReaction>
</comment>
<comment type="catalytic activity">
    <reaction evidence="1">
        <text>5-methylaminomethyl-2-(Se-phospho)selenouridine(34) in tRNA + H2O = 5-methylaminomethyl-2-selenouridine(34) in tRNA + phosphate</text>
        <dbReference type="Rhea" id="RHEA:60176"/>
        <dbReference type="Rhea" id="RHEA-COMP:10196"/>
        <dbReference type="Rhea" id="RHEA-COMP:15523"/>
        <dbReference type="ChEBI" id="CHEBI:15377"/>
        <dbReference type="ChEBI" id="CHEBI:43474"/>
        <dbReference type="ChEBI" id="CHEBI:82743"/>
        <dbReference type="ChEBI" id="CHEBI:143702"/>
    </reaction>
    <physiologicalReaction direction="left-to-right" evidence="1">
        <dbReference type="Rhea" id="RHEA:60177"/>
    </physiologicalReaction>
</comment>
<comment type="subunit">
    <text evidence="1">Monomer.</text>
</comment>
<comment type="similarity">
    <text evidence="1">Belongs to the SelU family.</text>
</comment>
<evidence type="ECO:0000255" key="1">
    <source>
        <dbReference type="HAMAP-Rule" id="MF_01622"/>
    </source>
</evidence>